<evidence type="ECO:0000255" key="1">
    <source>
        <dbReference type="PROSITE-ProRule" id="PRU00158"/>
    </source>
</evidence>
<evidence type="ECO:0000269" key="2">
    <source>
    </source>
</evidence>
<evidence type="ECO:0000269" key="3">
    <source>
    </source>
</evidence>
<evidence type="ECO:0000269" key="4">
    <source>
    </source>
</evidence>
<evidence type="ECO:0000269" key="5">
    <source>
    </source>
</evidence>
<evidence type="ECO:0000269" key="6">
    <source>
    </source>
</evidence>
<evidence type="ECO:0000269" key="7">
    <source>
    </source>
</evidence>
<evidence type="ECO:0000305" key="8"/>
<comment type="function">
    <text evidence="3 5 6">Required for mitochondrial cristae morphogenesis and MGM1-processing. Controls the stability of mitochondrial phosphatidylethanolamine (PE). With UPS1, controls the level of cardiolipin in mitochondria. Cardiolipin is a unique phospholipid with four fatty acid chains and is present mainly in the mitochondrial inner membrane where it stabilizes the electron transport chain supercomplex between complexes III and IV through direct interaction of their subunits.</text>
</comment>
<comment type="subunit">
    <text evidence="6 7">Interacts with MDM35.</text>
</comment>
<comment type="interaction">
    <interactant intactId="EBI-11337">
        <id>P35200</id>
    </interactant>
    <interactant intactId="EBI-2080774">
        <id>O60200</id>
        <label>MDM35</label>
    </interactant>
    <organismsDiffer>false</organismsDiffer>
    <experiments>6</experiments>
</comment>
<comment type="subcellular location">
    <subcellularLocation>
        <location>Mitochondrion inner membrane</location>
        <topology>Peripheral membrane protein</topology>
        <orientation>Intermembrane side</orientation>
    </subcellularLocation>
    <subcellularLocation>
        <location>Mitochondrion intermembrane space</location>
    </subcellularLocation>
    <text>Lacks the two major intermembrane space-targeting signals, bipartite presequences and cysteine motifs, and import is mediated by another IMS protein, MDM35.</text>
</comment>
<comment type="disruption phenotype">
    <text evidence="4">Defects in mitochondrial morphology.</text>
</comment>
<comment type="miscellaneous">
    <text evidence="2">Present with 2910 molecules/cell in log phase SD medium.</text>
</comment>
<comment type="similarity">
    <text evidence="8">Belongs to the slowmo family.</text>
</comment>
<proteinExistence type="evidence at protein level"/>
<sequence>MKLFQNSYDFNYPWDQVTAANWKKYPNEISTHVIAVDVLRRELKDQGKVLVTERLITVKQGVPKWIMMMLGGTNMSHVREVSVVDLNKKSLTMRSCNLTMCNLLKVYETVTYSPHPDDSANKTLFQQEAQITAYGSIRKLCNKMEDWSVQRFCENAKKGKMGFDAVLQVFSENWEKHVDDLSNQLVSKVNETMEDVKISAGTLLKGTERSGRTILQQNIDLFRDAYNHEN</sequence>
<name>UPS2_YEAST</name>
<accession>P35200</accession>
<accession>D6VYH4</accession>
<gene>
    <name type="primary">UPS2</name>
    <name type="synonym">AIM30</name>
    <name type="synonym">GEP1</name>
    <name type="synonym">MSF1</name>
    <name type="ordered locus">YLR168C</name>
    <name type="ORF">L9470.15</name>
</gene>
<reference key="1">
    <citation type="journal article" date="1993" name="Biochim. Biophys. Acta">
        <title>Cloning of the YAP19 gene encoding a putative yeast homolog of AP19, the mammalian small chain of the clathrin-assembly proteins.</title>
        <authorList>
            <person name="Nakai M."/>
            <person name="Takada T."/>
            <person name="Endo T."/>
        </authorList>
    </citation>
    <scope>NUCLEOTIDE SEQUENCE [GENOMIC DNA]</scope>
    <source>
        <strain>SP1</strain>
    </source>
</reference>
<reference key="2">
    <citation type="journal article" date="1997" name="Nature">
        <title>The nucleotide sequence of Saccharomyces cerevisiae chromosome XII.</title>
        <authorList>
            <person name="Johnston M."/>
            <person name="Hillier L.W."/>
            <person name="Riles L."/>
            <person name="Albermann K."/>
            <person name="Andre B."/>
            <person name="Ansorge W."/>
            <person name="Benes V."/>
            <person name="Brueckner M."/>
            <person name="Delius H."/>
            <person name="Dubois E."/>
            <person name="Duesterhoeft A."/>
            <person name="Entian K.-D."/>
            <person name="Floeth M."/>
            <person name="Goffeau A."/>
            <person name="Hebling U."/>
            <person name="Heumann K."/>
            <person name="Heuss-Neitzel D."/>
            <person name="Hilbert H."/>
            <person name="Hilger F."/>
            <person name="Kleine K."/>
            <person name="Koetter P."/>
            <person name="Louis E.J."/>
            <person name="Messenguy F."/>
            <person name="Mewes H.-W."/>
            <person name="Miosga T."/>
            <person name="Moestl D."/>
            <person name="Mueller-Auer S."/>
            <person name="Nentwich U."/>
            <person name="Obermaier B."/>
            <person name="Piravandi E."/>
            <person name="Pohl T.M."/>
            <person name="Portetelle D."/>
            <person name="Purnelle B."/>
            <person name="Rechmann S."/>
            <person name="Rieger M."/>
            <person name="Rinke M."/>
            <person name="Rose M."/>
            <person name="Scharfe M."/>
            <person name="Scherens B."/>
            <person name="Scholler P."/>
            <person name="Schwager C."/>
            <person name="Schwarz S."/>
            <person name="Underwood A.P."/>
            <person name="Urrestarazu L.A."/>
            <person name="Vandenbol M."/>
            <person name="Verhasselt P."/>
            <person name="Vierendeels F."/>
            <person name="Voet M."/>
            <person name="Volckaert G."/>
            <person name="Voss H."/>
            <person name="Wambutt R."/>
            <person name="Wedler E."/>
            <person name="Wedler H."/>
            <person name="Zimmermann F.K."/>
            <person name="Zollner A."/>
            <person name="Hani J."/>
            <person name="Hoheisel J.D."/>
        </authorList>
    </citation>
    <scope>NUCLEOTIDE SEQUENCE [LARGE SCALE GENOMIC DNA]</scope>
    <source>
        <strain>ATCC 204508 / S288c</strain>
    </source>
</reference>
<reference key="3">
    <citation type="journal article" date="2014" name="G3 (Bethesda)">
        <title>The reference genome sequence of Saccharomyces cerevisiae: Then and now.</title>
        <authorList>
            <person name="Engel S.R."/>
            <person name="Dietrich F.S."/>
            <person name="Fisk D.G."/>
            <person name="Binkley G."/>
            <person name="Balakrishnan R."/>
            <person name="Costanzo M.C."/>
            <person name="Dwight S.S."/>
            <person name="Hitz B.C."/>
            <person name="Karra K."/>
            <person name="Nash R.S."/>
            <person name="Weng S."/>
            <person name="Wong E.D."/>
            <person name="Lloyd P."/>
            <person name="Skrzypek M.S."/>
            <person name="Miyasato S.R."/>
            <person name="Simison M."/>
            <person name="Cherry J.M."/>
        </authorList>
    </citation>
    <scope>GENOME REANNOTATION</scope>
    <source>
        <strain>ATCC 204508 / S288c</strain>
    </source>
</reference>
<reference key="4">
    <citation type="journal article" date="2003" name="Nature">
        <title>Global analysis of protein localization in budding yeast.</title>
        <authorList>
            <person name="Huh W.-K."/>
            <person name="Falvo J.V."/>
            <person name="Gerke L.C."/>
            <person name="Carroll A.S."/>
            <person name="Howson R.W."/>
            <person name="Weissman J.S."/>
            <person name="O'Shea E.K."/>
        </authorList>
    </citation>
    <scope>SUBCELLULAR LOCATION [LARGE SCALE ANALYSIS]</scope>
</reference>
<reference key="5">
    <citation type="journal article" date="2003" name="Nature">
        <title>Global analysis of protein expression in yeast.</title>
        <authorList>
            <person name="Ghaemmaghami S."/>
            <person name="Huh W.-K."/>
            <person name="Bower K."/>
            <person name="Howson R.W."/>
            <person name="Belle A."/>
            <person name="Dephoure N."/>
            <person name="O'Shea E.K."/>
            <person name="Weissman J.S."/>
        </authorList>
    </citation>
    <scope>LEVEL OF PROTEIN EXPRESSION [LARGE SCALE ANALYSIS]</scope>
</reference>
<reference key="6">
    <citation type="journal article" date="2009" name="J. Cell Biol.">
        <title>The genetic interactome of prohibitins: coordinated control of cardiolipin and phosphatidylethanolamine by conserved regulators in mitochondria.</title>
        <authorList>
            <person name="Osman C."/>
            <person name="Haag M."/>
            <person name="Potting C."/>
            <person name="Rodenfels J."/>
            <person name="Dip P.V."/>
            <person name="Wieland F.T."/>
            <person name="Brugger B."/>
            <person name="Westermann B."/>
            <person name="Langer T."/>
        </authorList>
    </citation>
    <scope>FUNCTION</scope>
    <scope>SUBCELLULAR LOCATION</scope>
</reference>
<reference key="7">
    <citation type="journal article" date="2009" name="J. Cell Biol.">
        <title>Ups1p and Ups2p antagonistically regulate cardiolipin metabolism in mitochondria.</title>
        <authorList>
            <person name="Tamura Y."/>
            <person name="Endo T."/>
            <person name="Iijima M."/>
            <person name="Sesaki H."/>
        </authorList>
    </citation>
    <scope>FUNCTION</scope>
    <scope>SUBCELLULAR LOCATION</scope>
</reference>
<reference key="8">
    <citation type="journal article" date="2009" name="PLoS Genet.">
        <title>Computationally driven, quantitative experiments discover genes required for mitochondrial biogenesis.</title>
        <authorList>
            <person name="Hess D.C."/>
            <person name="Myers C.L."/>
            <person name="Huttenhower C."/>
            <person name="Hibbs M.A."/>
            <person name="Hayes A.P."/>
            <person name="Paw J."/>
            <person name="Clore J.J."/>
            <person name="Mendoza R.M."/>
            <person name="Luis B.S."/>
            <person name="Nislow C."/>
            <person name="Giaever G."/>
            <person name="Costanzo M."/>
            <person name="Troyanskaya O.G."/>
            <person name="Caudy A.A."/>
        </authorList>
    </citation>
    <scope>DISRUPTION PHENOTYPE</scope>
</reference>
<reference key="9">
    <citation type="journal article" date="2010" name="EMBO J.">
        <title>Mdm35p imports Ups proteins into the mitochondrial intermembrane space by functional complex formation.</title>
        <authorList>
            <person name="Tamura Y."/>
            <person name="Iijima M."/>
            <person name="Sesaki H."/>
        </authorList>
    </citation>
    <scope>SUBCELLULAR LOCATION</scope>
    <scope>FUNCTION</scope>
    <scope>INTERACTION MDM35</scope>
</reference>
<reference key="10">
    <citation type="journal article" date="2010" name="EMBO J.">
        <title>Regulation of mitochondrial phospholipids by Ups1/PRELI-like proteins depends on proteolysis and Mdm35.</title>
        <authorList>
            <person name="Potting C."/>
            <person name="Wilmes C."/>
            <person name="Engmann T."/>
            <person name="Osman C."/>
            <person name="Langer T."/>
        </authorList>
    </citation>
    <scope>SUBCELLULAR LOCATION</scope>
    <scope>INTERACTION WITH MDM35</scope>
</reference>
<dbReference type="EMBL" id="X70279">
    <property type="protein sequence ID" value="CAA49766.1"/>
    <property type="molecule type" value="Genomic_DNA"/>
</dbReference>
<dbReference type="EMBL" id="U17246">
    <property type="protein sequence ID" value="AAB67467.1"/>
    <property type="molecule type" value="Genomic_DNA"/>
</dbReference>
<dbReference type="EMBL" id="BK006945">
    <property type="protein sequence ID" value="DAA09490.1"/>
    <property type="molecule type" value="Genomic_DNA"/>
</dbReference>
<dbReference type="PIR" id="S37758">
    <property type="entry name" value="S37758"/>
</dbReference>
<dbReference type="RefSeq" id="NP_013269.1">
    <property type="nucleotide sequence ID" value="NM_001182055.1"/>
</dbReference>
<dbReference type="SMR" id="P35200"/>
<dbReference type="BioGRID" id="31441">
    <property type="interactions" value="158"/>
</dbReference>
<dbReference type="DIP" id="DIP-4699N"/>
<dbReference type="FunCoup" id="P35200">
    <property type="interactions" value="1231"/>
</dbReference>
<dbReference type="IntAct" id="P35200">
    <property type="interactions" value="10"/>
</dbReference>
<dbReference type="MINT" id="P35200"/>
<dbReference type="STRING" id="4932.YLR168C"/>
<dbReference type="PaxDb" id="4932-YLR168C"/>
<dbReference type="PeptideAtlas" id="P35200"/>
<dbReference type="DNASU" id="850865"/>
<dbReference type="EnsemblFungi" id="YLR168C_mRNA">
    <property type="protein sequence ID" value="YLR168C"/>
    <property type="gene ID" value="YLR168C"/>
</dbReference>
<dbReference type="GeneID" id="850865"/>
<dbReference type="KEGG" id="sce:YLR168C"/>
<dbReference type="AGR" id="SGD:S000004158"/>
<dbReference type="SGD" id="S000004158">
    <property type="gene designation" value="UPS2"/>
</dbReference>
<dbReference type="VEuPathDB" id="FungiDB:YLR168C"/>
<dbReference type="eggNOG" id="KOG3336">
    <property type="taxonomic scope" value="Eukaryota"/>
</dbReference>
<dbReference type="GeneTree" id="ENSGT00950000182810"/>
<dbReference type="HOGENOM" id="CLU_067902_1_0_1"/>
<dbReference type="InParanoid" id="P35200"/>
<dbReference type="OMA" id="YCPWNEK"/>
<dbReference type="OrthoDB" id="407630at2759"/>
<dbReference type="BioCyc" id="YEAST:G3O-32298-MONOMER"/>
<dbReference type="Reactome" id="R-SCE-6803204">
    <property type="pathway name" value="TP53 Regulates Transcription of Genes Involved in Cytochrome C Release"/>
</dbReference>
<dbReference type="BioGRID-ORCS" id="850865">
    <property type="hits" value="3 hits in 10 CRISPR screens"/>
</dbReference>
<dbReference type="PRO" id="PR:P35200"/>
<dbReference type="Proteomes" id="UP000002311">
    <property type="component" value="Chromosome XII"/>
</dbReference>
<dbReference type="RNAct" id="P35200">
    <property type="molecule type" value="protein"/>
</dbReference>
<dbReference type="GO" id="GO:0005743">
    <property type="term" value="C:mitochondrial inner membrane"/>
    <property type="evidence" value="ECO:0007669"/>
    <property type="project" value="UniProtKB-SubCell"/>
</dbReference>
<dbReference type="GO" id="GO:0005758">
    <property type="term" value="C:mitochondrial intermembrane space"/>
    <property type="evidence" value="ECO:0000314"/>
    <property type="project" value="SGD"/>
</dbReference>
<dbReference type="GO" id="GO:0005739">
    <property type="term" value="C:mitochondrion"/>
    <property type="evidence" value="ECO:0007005"/>
    <property type="project" value="SGD"/>
</dbReference>
<dbReference type="GO" id="GO:1990050">
    <property type="term" value="F:phosphatidic acid transfer activity"/>
    <property type="evidence" value="ECO:0000318"/>
    <property type="project" value="GO_Central"/>
</dbReference>
<dbReference type="GO" id="GO:0032048">
    <property type="term" value="P:cardiolipin metabolic process"/>
    <property type="evidence" value="ECO:0000316"/>
    <property type="project" value="SGD"/>
</dbReference>
<dbReference type="GO" id="GO:0042407">
    <property type="term" value="P:cristae formation"/>
    <property type="evidence" value="ECO:0000315"/>
    <property type="project" value="SGD"/>
</dbReference>
<dbReference type="GO" id="GO:2001246">
    <property type="term" value="P:negative regulation of phosphatidylcholine biosynthetic process"/>
    <property type="evidence" value="ECO:0000315"/>
    <property type="project" value="SGD"/>
</dbReference>
<dbReference type="GO" id="GO:0046337">
    <property type="term" value="P:phosphatidylethanolamine metabolic process"/>
    <property type="evidence" value="ECO:0000315"/>
    <property type="project" value="SGD"/>
</dbReference>
<dbReference type="GO" id="GO:0015914">
    <property type="term" value="P:phospholipid transport"/>
    <property type="evidence" value="ECO:0000314"/>
    <property type="project" value="SGD"/>
</dbReference>
<dbReference type="InterPro" id="IPR006797">
    <property type="entry name" value="PRELI/MSF1_dom"/>
</dbReference>
<dbReference type="InterPro" id="IPR037365">
    <property type="entry name" value="Slowmo/Ups"/>
</dbReference>
<dbReference type="PANTHER" id="PTHR11158">
    <property type="entry name" value="MSF1/PX19 RELATED"/>
    <property type="match status" value="1"/>
</dbReference>
<dbReference type="Pfam" id="PF04707">
    <property type="entry name" value="PRELI"/>
    <property type="match status" value="1"/>
</dbReference>
<dbReference type="PROSITE" id="PS50904">
    <property type="entry name" value="PRELI_MSF1"/>
    <property type="match status" value="1"/>
</dbReference>
<feature type="chain" id="PRO_0000096596" description="Protein UPS2, mitochondrial">
    <location>
        <begin position="1"/>
        <end position="230"/>
    </location>
</feature>
<feature type="domain" description="PRELI/MSF1" evidence="1">
    <location>
        <begin position="1"/>
        <end position="175"/>
    </location>
</feature>
<protein>
    <recommendedName>
        <fullName>Protein UPS2, mitochondrial</fullName>
    </recommendedName>
    <alternativeName>
        <fullName>Altered inheritance rate of mitochondrion protein 30</fullName>
    </alternativeName>
    <alternativeName>
        <fullName>Genetic interactor of prohibitins protein 1</fullName>
    </alternativeName>
    <alternativeName>
        <fullName>Unprocessed MGM1 protein 2</fullName>
    </alternativeName>
</protein>
<keyword id="KW-0472">Membrane</keyword>
<keyword id="KW-0496">Mitochondrion</keyword>
<keyword id="KW-0999">Mitochondrion inner membrane</keyword>
<keyword id="KW-1185">Reference proteome</keyword>
<organism>
    <name type="scientific">Saccharomyces cerevisiae (strain ATCC 204508 / S288c)</name>
    <name type="common">Baker's yeast</name>
    <dbReference type="NCBI Taxonomy" id="559292"/>
    <lineage>
        <taxon>Eukaryota</taxon>
        <taxon>Fungi</taxon>
        <taxon>Dikarya</taxon>
        <taxon>Ascomycota</taxon>
        <taxon>Saccharomycotina</taxon>
        <taxon>Saccharomycetes</taxon>
        <taxon>Saccharomycetales</taxon>
        <taxon>Saccharomycetaceae</taxon>
        <taxon>Saccharomyces</taxon>
    </lineage>
</organism>